<reference key="1">
    <citation type="journal article" date="2007" name="Nat. Biotechnol.">
        <title>Complete genome sequence of the erythromycin-producing bacterium Saccharopolyspora erythraea NRRL23338.</title>
        <authorList>
            <person name="Oliynyk M."/>
            <person name="Samborskyy M."/>
            <person name="Lester J.B."/>
            <person name="Mironenko T."/>
            <person name="Scott N."/>
            <person name="Dickens S."/>
            <person name="Haydock S.F."/>
            <person name="Leadlay P.F."/>
        </authorList>
    </citation>
    <scope>NUCLEOTIDE SEQUENCE [LARGE SCALE GENOMIC DNA]</scope>
    <source>
        <strain>ATCC 11635 / DSM 40517 / JCM 4748 / NBRC 13426 / NCIMB 8594 / NRRL 2338</strain>
    </source>
</reference>
<sequence>MTKEFHAVGERSVVTTAVDAPQARHARRPAELLKAYAGLIKPRVIELLLVTTIPAMLLAARGIPSPWLVIATLVGGTMAAGSANALNCVADADIDQVMKRTRARPLVRHTVSNRHALVFGIALGAGSFGWLWATTNLLSAVLAVATILFYVFVYTLVLKRRTAQNIVWGGAAGCMPVVIGWAGVTGRVDWPALVMFGIIFFWTPPHTWSLAMKYRDDYERAGVPMLPVVARPTYVSRQIVVFTWLMVLWTLLLAPATGWLYTAFAIAAGAWFLVLAHRLHAQTRRGEPTKPLKLFHLSNTYLMIVCVALAVDSALSLPVLGWPF</sequence>
<evidence type="ECO:0000255" key="1">
    <source>
        <dbReference type="HAMAP-Rule" id="MF_00154"/>
    </source>
</evidence>
<proteinExistence type="inferred from homology"/>
<organism>
    <name type="scientific">Saccharopolyspora erythraea (strain ATCC 11635 / DSM 40517 / JCM 4748 / NBRC 13426 / NCIMB 8594 / NRRL 2338)</name>
    <dbReference type="NCBI Taxonomy" id="405948"/>
    <lineage>
        <taxon>Bacteria</taxon>
        <taxon>Bacillati</taxon>
        <taxon>Actinomycetota</taxon>
        <taxon>Actinomycetes</taxon>
        <taxon>Pseudonocardiales</taxon>
        <taxon>Pseudonocardiaceae</taxon>
        <taxon>Saccharopolyspora</taxon>
    </lineage>
</organism>
<protein>
    <recommendedName>
        <fullName evidence="1">Protoheme IX farnesyltransferase 2</fullName>
        <ecNumber evidence="1">2.5.1.141</ecNumber>
    </recommendedName>
    <alternativeName>
        <fullName evidence="1">Heme B farnesyltransferase 2</fullName>
    </alternativeName>
    <alternativeName>
        <fullName evidence="1">Heme O synthase 2</fullName>
    </alternativeName>
</protein>
<feature type="chain" id="PRO_0000327148" description="Protoheme IX farnesyltransferase 2">
    <location>
        <begin position="1"/>
        <end position="324"/>
    </location>
</feature>
<feature type="transmembrane region" description="Helical" evidence="1">
    <location>
        <begin position="39"/>
        <end position="59"/>
    </location>
</feature>
<feature type="transmembrane region" description="Helical" evidence="1">
    <location>
        <begin position="63"/>
        <end position="83"/>
    </location>
</feature>
<feature type="transmembrane region" description="Helical" evidence="1">
    <location>
        <begin position="115"/>
        <end position="135"/>
    </location>
</feature>
<feature type="transmembrane region" description="Helical" evidence="1">
    <location>
        <begin position="137"/>
        <end position="157"/>
    </location>
</feature>
<feature type="transmembrane region" description="Helical" evidence="1">
    <location>
        <begin position="166"/>
        <end position="186"/>
    </location>
</feature>
<feature type="transmembrane region" description="Helical" evidence="1">
    <location>
        <begin position="192"/>
        <end position="212"/>
    </location>
</feature>
<feature type="transmembrane region" description="Helical" evidence="1">
    <location>
        <begin position="239"/>
        <end position="259"/>
    </location>
</feature>
<feature type="transmembrane region" description="Helical" evidence="1">
    <location>
        <begin position="260"/>
        <end position="280"/>
    </location>
</feature>
<feature type="transmembrane region" description="Helical" evidence="1">
    <location>
        <begin position="302"/>
        <end position="322"/>
    </location>
</feature>
<keyword id="KW-1003">Cell membrane</keyword>
<keyword id="KW-0350">Heme biosynthesis</keyword>
<keyword id="KW-0472">Membrane</keyword>
<keyword id="KW-1185">Reference proteome</keyword>
<keyword id="KW-0808">Transferase</keyword>
<keyword id="KW-0812">Transmembrane</keyword>
<keyword id="KW-1133">Transmembrane helix</keyword>
<name>COXX2_SACEN</name>
<comment type="function">
    <text evidence="1">Converts heme B (protoheme IX) to heme O by substitution of the vinyl group on carbon 2 of heme B porphyrin ring with a hydroxyethyl farnesyl side group.</text>
</comment>
<comment type="catalytic activity">
    <reaction evidence="1">
        <text>heme b + (2E,6E)-farnesyl diphosphate + H2O = Fe(II)-heme o + diphosphate</text>
        <dbReference type="Rhea" id="RHEA:28070"/>
        <dbReference type="ChEBI" id="CHEBI:15377"/>
        <dbReference type="ChEBI" id="CHEBI:33019"/>
        <dbReference type="ChEBI" id="CHEBI:60344"/>
        <dbReference type="ChEBI" id="CHEBI:60530"/>
        <dbReference type="ChEBI" id="CHEBI:175763"/>
        <dbReference type="EC" id="2.5.1.141"/>
    </reaction>
</comment>
<comment type="pathway">
    <text evidence="1">Porphyrin-containing compound metabolism; heme O biosynthesis; heme O from protoheme: step 1/1.</text>
</comment>
<comment type="subcellular location">
    <subcellularLocation>
        <location evidence="1">Cell membrane</location>
        <topology evidence="1">Multi-pass membrane protein</topology>
    </subcellularLocation>
</comment>
<comment type="miscellaneous">
    <text evidence="1">Carbon 2 of the heme B porphyrin ring is defined according to the Fischer nomenclature.</text>
</comment>
<comment type="similarity">
    <text evidence="1">Belongs to the UbiA prenyltransferase family. Protoheme IX farnesyltransferase subfamily.</text>
</comment>
<gene>
    <name evidence="1" type="primary">ctaB2</name>
    <name type="ordered locus">SACE_2161</name>
</gene>
<dbReference type="EC" id="2.5.1.141" evidence="1"/>
<dbReference type="EMBL" id="AM420293">
    <property type="protein sequence ID" value="CAM01467.1"/>
    <property type="molecule type" value="Genomic_DNA"/>
</dbReference>
<dbReference type="RefSeq" id="WP_009942961.1">
    <property type="nucleotide sequence ID" value="NC_009142.1"/>
</dbReference>
<dbReference type="SMR" id="A4FBP2"/>
<dbReference type="STRING" id="405948.SACE_2161"/>
<dbReference type="KEGG" id="sen:SACE_2161"/>
<dbReference type="eggNOG" id="COG0109">
    <property type="taxonomic scope" value="Bacteria"/>
</dbReference>
<dbReference type="HOGENOM" id="CLU_029631_0_1_11"/>
<dbReference type="UniPathway" id="UPA00834">
    <property type="reaction ID" value="UER00712"/>
</dbReference>
<dbReference type="Proteomes" id="UP000006728">
    <property type="component" value="Chromosome"/>
</dbReference>
<dbReference type="GO" id="GO:0005886">
    <property type="term" value="C:plasma membrane"/>
    <property type="evidence" value="ECO:0007669"/>
    <property type="project" value="UniProtKB-SubCell"/>
</dbReference>
<dbReference type="GO" id="GO:0008495">
    <property type="term" value="F:protoheme IX farnesyltransferase activity"/>
    <property type="evidence" value="ECO:0007669"/>
    <property type="project" value="UniProtKB-UniRule"/>
</dbReference>
<dbReference type="GO" id="GO:0048034">
    <property type="term" value="P:heme O biosynthetic process"/>
    <property type="evidence" value="ECO:0007669"/>
    <property type="project" value="UniProtKB-UniRule"/>
</dbReference>
<dbReference type="CDD" id="cd13957">
    <property type="entry name" value="PT_UbiA_Cox10"/>
    <property type="match status" value="1"/>
</dbReference>
<dbReference type="FunFam" id="1.10.357.140:FF:000001">
    <property type="entry name" value="Protoheme IX farnesyltransferase"/>
    <property type="match status" value="1"/>
</dbReference>
<dbReference type="Gene3D" id="1.10.357.140">
    <property type="entry name" value="UbiA prenyltransferase"/>
    <property type="match status" value="1"/>
</dbReference>
<dbReference type="HAMAP" id="MF_00154">
    <property type="entry name" value="CyoE_CtaB"/>
    <property type="match status" value="1"/>
</dbReference>
<dbReference type="InterPro" id="IPR006369">
    <property type="entry name" value="Protohaem_IX_farnesylTrfase"/>
</dbReference>
<dbReference type="InterPro" id="IPR000537">
    <property type="entry name" value="UbiA_prenyltransferase"/>
</dbReference>
<dbReference type="InterPro" id="IPR044878">
    <property type="entry name" value="UbiA_sf"/>
</dbReference>
<dbReference type="NCBIfam" id="TIGR01473">
    <property type="entry name" value="cyoE_ctaB"/>
    <property type="match status" value="1"/>
</dbReference>
<dbReference type="NCBIfam" id="NF003349">
    <property type="entry name" value="PRK04375.1-2"/>
    <property type="match status" value="1"/>
</dbReference>
<dbReference type="PANTHER" id="PTHR43448:SF7">
    <property type="entry name" value="4-HYDROXYBENZOATE SOLANESYLTRANSFERASE"/>
    <property type="match status" value="1"/>
</dbReference>
<dbReference type="PANTHER" id="PTHR43448">
    <property type="entry name" value="PROTOHEME IX FARNESYLTRANSFERASE, MITOCHONDRIAL"/>
    <property type="match status" value="1"/>
</dbReference>
<dbReference type="Pfam" id="PF01040">
    <property type="entry name" value="UbiA"/>
    <property type="match status" value="1"/>
</dbReference>
<accession>A4FBP2</accession>